<comment type="function">
    <text evidence="1">Catalyzes the hydrolysis of the adenine ring of phosphoribosyl-AMP.</text>
</comment>
<comment type="catalytic activity">
    <reaction evidence="1">
        <text>1-(5-phospho-beta-D-ribosyl)-5'-AMP + H2O = 1-(5-phospho-beta-D-ribosyl)-5-[(5-phospho-beta-D-ribosylamino)methylideneamino]imidazole-4-carboxamide</text>
        <dbReference type="Rhea" id="RHEA:20049"/>
        <dbReference type="ChEBI" id="CHEBI:15377"/>
        <dbReference type="ChEBI" id="CHEBI:58435"/>
        <dbReference type="ChEBI" id="CHEBI:59457"/>
        <dbReference type="EC" id="3.5.4.19"/>
    </reaction>
</comment>
<comment type="cofactor">
    <cofactor evidence="1">
        <name>Mg(2+)</name>
        <dbReference type="ChEBI" id="CHEBI:18420"/>
    </cofactor>
    <text evidence="1">Binds 1 Mg(2+) ion per subunit.</text>
</comment>
<comment type="cofactor">
    <cofactor evidence="1">
        <name>Zn(2+)</name>
        <dbReference type="ChEBI" id="CHEBI:29105"/>
    </cofactor>
    <text evidence="1">Binds 1 zinc ion per subunit.</text>
</comment>
<comment type="pathway">
    <text evidence="1">Amino-acid biosynthesis; L-histidine biosynthesis; L-histidine from 5-phospho-alpha-D-ribose 1-diphosphate: step 3/9.</text>
</comment>
<comment type="subunit">
    <text evidence="1">Homodimer.</text>
</comment>
<comment type="subcellular location">
    <subcellularLocation>
        <location evidence="1">Cytoplasm</location>
    </subcellularLocation>
</comment>
<comment type="similarity">
    <text evidence="1">Belongs to the PRA-CH family.</text>
</comment>
<dbReference type="EC" id="3.5.4.19" evidence="1"/>
<dbReference type="EMBL" id="CP000527">
    <property type="protein sequence ID" value="ABM29861.1"/>
    <property type="molecule type" value="Genomic_DNA"/>
</dbReference>
<dbReference type="RefSeq" id="WP_010937424.1">
    <property type="nucleotide sequence ID" value="NC_008751.1"/>
</dbReference>
<dbReference type="SMR" id="A1VHE5"/>
<dbReference type="KEGG" id="dvl:Dvul_2850"/>
<dbReference type="HOGENOM" id="CLU_048577_5_0_7"/>
<dbReference type="UniPathway" id="UPA00031">
    <property type="reaction ID" value="UER00008"/>
</dbReference>
<dbReference type="Proteomes" id="UP000009173">
    <property type="component" value="Chromosome"/>
</dbReference>
<dbReference type="GO" id="GO:0005737">
    <property type="term" value="C:cytoplasm"/>
    <property type="evidence" value="ECO:0007669"/>
    <property type="project" value="UniProtKB-SubCell"/>
</dbReference>
<dbReference type="GO" id="GO:0000287">
    <property type="term" value="F:magnesium ion binding"/>
    <property type="evidence" value="ECO:0007669"/>
    <property type="project" value="UniProtKB-UniRule"/>
</dbReference>
<dbReference type="GO" id="GO:0004635">
    <property type="term" value="F:phosphoribosyl-AMP cyclohydrolase activity"/>
    <property type="evidence" value="ECO:0007669"/>
    <property type="project" value="UniProtKB-UniRule"/>
</dbReference>
<dbReference type="GO" id="GO:0008270">
    <property type="term" value="F:zinc ion binding"/>
    <property type="evidence" value="ECO:0007669"/>
    <property type="project" value="UniProtKB-UniRule"/>
</dbReference>
<dbReference type="GO" id="GO:0000105">
    <property type="term" value="P:L-histidine biosynthetic process"/>
    <property type="evidence" value="ECO:0007669"/>
    <property type="project" value="UniProtKB-UniRule"/>
</dbReference>
<dbReference type="FunFam" id="3.10.20.810:FF:000001">
    <property type="entry name" value="Histidine biosynthesis bifunctional protein HisIE"/>
    <property type="match status" value="1"/>
</dbReference>
<dbReference type="Gene3D" id="4.10.80.70">
    <property type="match status" value="1"/>
</dbReference>
<dbReference type="Gene3D" id="3.10.20.810">
    <property type="entry name" value="Phosphoribosyl-AMP cyclohydrolase"/>
    <property type="match status" value="1"/>
</dbReference>
<dbReference type="HAMAP" id="MF_01021">
    <property type="entry name" value="HisI"/>
    <property type="match status" value="1"/>
</dbReference>
<dbReference type="InterPro" id="IPR026660">
    <property type="entry name" value="PRA-CH"/>
</dbReference>
<dbReference type="InterPro" id="IPR002496">
    <property type="entry name" value="PRib_AMP_CycHydrolase_dom"/>
</dbReference>
<dbReference type="InterPro" id="IPR038019">
    <property type="entry name" value="PRib_AMP_CycHydrolase_sf"/>
</dbReference>
<dbReference type="NCBIfam" id="NF000768">
    <property type="entry name" value="PRK00051.1"/>
    <property type="match status" value="1"/>
</dbReference>
<dbReference type="PANTHER" id="PTHR42945">
    <property type="entry name" value="HISTIDINE BIOSYNTHESIS BIFUNCTIONAL PROTEIN"/>
    <property type="match status" value="1"/>
</dbReference>
<dbReference type="PANTHER" id="PTHR42945:SF1">
    <property type="entry name" value="HISTIDINE BIOSYNTHESIS BIFUNCTIONAL PROTEIN HIS7"/>
    <property type="match status" value="1"/>
</dbReference>
<dbReference type="Pfam" id="PF01502">
    <property type="entry name" value="PRA-CH"/>
    <property type="match status" value="1"/>
</dbReference>
<dbReference type="SUPFAM" id="SSF141734">
    <property type="entry name" value="HisI-like"/>
    <property type="match status" value="1"/>
</dbReference>
<proteinExistence type="inferred from homology"/>
<keyword id="KW-0028">Amino-acid biosynthesis</keyword>
<keyword id="KW-0963">Cytoplasm</keyword>
<keyword id="KW-0368">Histidine biosynthesis</keyword>
<keyword id="KW-0378">Hydrolase</keyword>
<keyword id="KW-0460">Magnesium</keyword>
<keyword id="KW-0479">Metal-binding</keyword>
<keyword id="KW-0862">Zinc</keyword>
<accession>A1VHE5</accession>
<gene>
    <name evidence="1" type="primary">hisI</name>
    <name type="ordered locus">Dvul_2850</name>
</gene>
<protein>
    <recommendedName>
        <fullName evidence="1">Phosphoribosyl-AMP cyclohydrolase</fullName>
        <shortName evidence="1">PRA-CH</shortName>
        <ecNumber evidence="1">3.5.4.19</ecNumber>
    </recommendedName>
</protein>
<name>HIS3_NITV4</name>
<evidence type="ECO:0000255" key="1">
    <source>
        <dbReference type="HAMAP-Rule" id="MF_01021"/>
    </source>
</evidence>
<feature type="chain" id="PRO_1000063404" description="Phosphoribosyl-AMP cyclohydrolase">
    <location>
        <begin position="1"/>
        <end position="126"/>
    </location>
</feature>
<feature type="binding site" evidence="1">
    <location>
        <position position="76"/>
    </location>
    <ligand>
        <name>Mg(2+)</name>
        <dbReference type="ChEBI" id="CHEBI:18420"/>
    </ligand>
</feature>
<feature type="binding site" evidence="1">
    <location>
        <position position="77"/>
    </location>
    <ligand>
        <name>Zn(2+)</name>
        <dbReference type="ChEBI" id="CHEBI:29105"/>
        <note>ligand shared between dimeric partners</note>
    </ligand>
</feature>
<feature type="binding site" evidence="1">
    <location>
        <position position="78"/>
    </location>
    <ligand>
        <name>Mg(2+)</name>
        <dbReference type="ChEBI" id="CHEBI:18420"/>
    </ligand>
</feature>
<feature type="binding site" evidence="1">
    <location>
        <position position="80"/>
    </location>
    <ligand>
        <name>Mg(2+)</name>
        <dbReference type="ChEBI" id="CHEBI:18420"/>
    </ligand>
</feature>
<feature type="binding site" evidence="1">
    <location>
        <position position="94"/>
    </location>
    <ligand>
        <name>Zn(2+)</name>
        <dbReference type="ChEBI" id="CHEBI:29105"/>
        <note>ligand shared between dimeric partners</note>
    </ligand>
</feature>
<feature type="binding site" evidence="1">
    <location>
        <position position="101"/>
    </location>
    <ligand>
        <name>Zn(2+)</name>
        <dbReference type="ChEBI" id="CHEBI:29105"/>
        <note>ligand shared between dimeric partners</note>
    </ligand>
</feature>
<sequence length="126" mass="13991">MTAFVPDFGKAGGLVPAIAQDADTGEVLMMAWMNAEAFEMTLKTGEAHYFSRSRGRLWHKGGTSGHTQHIRAVRLDCDSDTILLLVEQRGGAACHEGYRSCFYREMKDGEVSICSPKVFDPKEVYK</sequence>
<reference key="1">
    <citation type="journal article" date="2009" name="Environ. Microbiol.">
        <title>Contribution of mobile genetic elements to Desulfovibrio vulgaris genome plasticity.</title>
        <authorList>
            <person name="Walker C.B."/>
            <person name="Stolyar S."/>
            <person name="Chivian D."/>
            <person name="Pinel N."/>
            <person name="Gabster J.A."/>
            <person name="Dehal P.S."/>
            <person name="He Z."/>
            <person name="Yang Z.K."/>
            <person name="Yen H.C."/>
            <person name="Zhou J."/>
            <person name="Wall J.D."/>
            <person name="Hazen T.C."/>
            <person name="Arkin A.P."/>
            <person name="Stahl D.A."/>
        </authorList>
    </citation>
    <scope>NUCLEOTIDE SEQUENCE [LARGE SCALE GENOMIC DNA]</scope>
    <source>
        <strain>DP4</strain>
    </source>
</reference>
<organism>
    <name type="scientific">Nitratidesulfovibrio vulgaris (strain DP4)</name>
    <name type="common">Desulfovibrio vulgaris</name>
    <dbReference type="NCBI Taxonomy" id="391774"/>
    <lineage>
        <taxon>Bacteria</taxon>
        <taxon>Pseudomonadati</taxon>
        <taxon>Thermodesulfobacteriota</taxon>
        <taxon>Desulfovibrionia</taxon>
        <taxon>Desulfovibrionales</taxon>
        <taxon>Desulfovibrionaceae</taxon>
        <taxon>Nitratidesulfovibrio</taxon>
    </lineage>
</organism>